<accession>O47475</accession>
<feature type="chain" id="PRO_0000183801" description="Cytochrome c oxidase subunit 3">
    <location>
        <begin position="1"/>
        <end position="259"/>
    </location>
</feature>
<feature type="transmembrane region" description="Helical" evidence="2">
    <location>
        <begin position="13"/>
        <end position="33"/>
    </location>
</feature>
<feature type="transmembrane region" description="Helical" evidence="2">
    <location>
        <begin position="36"/>
        <end position="56"/>
    </location>
</feature>
<feature type="transmembrane region" description="Helical" evidence="2">
    <location>
        <begin position="80"/>
        <end position="100"/>
    </location>
</feature>
<feature type="transmembrane region" description="Helical" evidence="2">
    <location>
        <begin position="125"/>
        <end position="145"/>
    </location>
</feature>
<feature type="transmembrane region" description="Helical" evidence="2">
    <location>
        <begin position="154"/>
        <end position="174"/>
    </location>
</feature>
<feature type="transmembrane region" description="Helical" evidence="2">
    <location>
        <begin position="195"/>
        <end position="215"/>
    </location>
</feature>
<feature type="transmembrane region" description="Helical" evidence="2">
    <location>
        <begin position="237"/>
        <end position="257"/>
    </location>
</feature>
<reference key="1">
    <citation type="submission" date="1997-12" db="EMBL/GenBank/DDBJ databases">
        <title>Completing of squid (Loligo breekeri) mitochondrial genome sequencing.</title>
        <authorList>
            <person name="Tomita K."/>
            <person name="Ueda T."/>
            <person name="Watanabe K."/>
        </authorList>
    </citation>
    <scope>NUCLEOTIDE SEQUENCE [GENOMIC DNA]</scope>
</reference>
<sequence>MIRNPFHLVEYSPWPLTGSLGAMFLTVGLTSWFHNHGFITMLLGLFLVLMTMFQWWRDIIRESTFQGYHTMKVSLGMRMGMVLFITSEICFFFAFFWAYFHSSLAPNTDIGASWPPLHINPLNPFQIPLLNTAILLASGVTVTWAHHSLMGGNHAEATQSMVLTVILGGYFTLLQAEEYMEAPFSIADSVYGATFFVATGFHGLHVIIGSVFLLICLFRMLIHHFSTNHHFGFEAAAWYWHFVDVVWLILYTCIYWWGS</sequence>
<gene>
    <name type="primary">COIII</name>
</gene>
<protein>
    <recommendedName>
        <fullName>Cytochrome c oxidase subunit 3</fullName>
        <ecNumber>7.1.1.9</ecNumber>
    </recommendedName>
    <alternativeName>
        <fullName>Cytochrome c oxidase polypeptide III</fullName>
    </alternativeName>
</protein>
<dbReference type="EC" id="7.1.1.9"/>
<dbReference type="EMBL" id="AB009838">
    <property type="protein sequence ID" value="BAA24058.1"/>
    <property type="molecule type" value="Genomic_DNA"/>
</dbReference>
<dbReference type="EMBL" id="AB029616">
    <property type="protein sequence ID" value="BAB03645.1"/>
    <property type="molecule type" value="Genomic_DNA"/>
</dbReference>
<dbReference type="SMR" id="O47475"/>
<dbReference type="CTD" id="4514"/>
<dbReference type="GO" id="GO:0005743">
    <property type="term" value="C:mitochondrial inner membrane"/>
    <property type="evidence" value="ECO:0007669"/>
    <property type="project" value="UniProtKB-SubCell"/>
</dbReference>
<dbReference type="GO" id="GO:0004129">
    <property type="term" value="F:cytochrome-c oxidase activity"/>
    <property type="evidence" value="ECO:0007669"/>
    <property type="project" value="UniProtKB-EC"/>
</dbReference>
<dbReference type="GO" id="GO:0006123">
    <property type="term" value="P:mitochondrial electron transport, cytochrome c to oxygen"/>
    <property type="evidence" value="ECO:0007669"/>
    <property type="project" value="TreeGrafter"/>
</dbReference>
<dbReference type="CDD" id="cd01665">
    <property type="entry name" value="Cyt_c_Oxidase_III"/>
    <property type="match status" value="1"/>
</dbReference>
<dbReference type="FunFam" id="1.20.120.80:FF:000002">
    <property type="entry name" value="Cytochrome c oxidase subunit 3"/>
    <property type="match status" value="1"/>
</dbReference>
<dbReference type="Gene3D" id="1.10.287.70">
    <property type="match status" value="1"/>
</dbReference>
<dbReference type="Gene3D" id="1.20.120.80">
    <property type="entry name" value="Cytochrome c oxidase, subunit III, four-helix bundle"/>
    <property type="match status" value="1"/>
</dbReference>
<dbReference type="InterPro" id="IPR024791">
    <property type="entry name" value="Cyt_c/ubiquinol_Oxase_su3"/>
</dbReference>
<dbReference type="InterPro" id="IPR033945">
    <property type="entry name" value="Cyt_c_oxase_su3_dom"/>
</dbReference>
<dbReference type="InterPro" id="IPR000298">
    <property type="entry name" value="Cyt_c_oxidase-like_su3"/>
</dbReference>
<dbReference type="InterPro" id="IPR035973">
    <property type="entry name" value="Cyt_c_oxidase_su3-like_sf"/>
</dbReference>
<dbReference type="InterPro" id="IPR013833">
    <property type="entry name" value="Cyt_c_oxidase_su3_a-hlx"/>
</dbReference>
<dbReference type="PANTHER" id="PTHR11403:SF7">
    <property type="entry name" value="CYTOCHROME C OXIDASE SUBUNIT 3"/>
    <property type="match status" value="1"/>
</dbReference>
<dbReference type="PANTHER" id="PTHR11403">
    <property type="entry name" value="CYTOCHROME C OXIDASE SUBUNIT III"/>
    <property type="match status" value="1"/>
</dbReference>
<dbReference type="Pfam" id="PF00510">
    <property type="entry name" value="COX3"/>
    <property type="match status" value="1"/>
</dbReference>
<dbReference type="SUPFAM" id="SSF81452">
    <property type="entry name" value="Cytochrome c oxidase subunit III-like"/>
    <property type="match status" value="1"/>
</dbReference>
<dbReference type="PROSITE" id="PS50253">
    <property type="entry name" value="COX3"/>
    <property type="match status" value="1"/>
</dbReference>
<organism>
    <name type="scientific">Heterololigo bleekeri</name>
    <name type="common">Spear squid</name>
    <name type="synonym">Loligo bleekeri</name>
    <dbReference type="NCBI Taxonomy" id="1423826"/>
    <lineage>
        <taxon>Eukaryota</taxon>
        <taxon>Metazoa</taxon>
        <taxon>Spiralia</taxon>
        <taxon>Lophotrochozoa</taxon>
        <taxon>Mollusca</taxon>
        <taxon>Cephalopoda</taxon>
        <taxon>Coleoidea</taxon>
        <taxon>Decapodiformes</taxon>
        <taxon>Myopsida</taxon>
        <taxon>Loliginidae</taxon>
        <taxon>Heterololigo</taxon>
    </lineage>
</organism>
<name>COX3_HETBL</name>
<comment type="function">
    <text evidence="1">Component of the cytochrome c oxidase, the last enzyme in the mitochondrial electron transport chain which drives oxidative phosphorylation. The respiratory chain contains 3 multisubunit complexes succinate dehydrogenase (complex II, CII), ubiquinol-cytochrome c oxidoreductase (cytochrome b-c1 complex, complex III, CIII) and cytochrome c oxidase (complex IV, CIV), that cooperate to transfer electrons derived from NADH and succinate to molecular oxygen, creating an electrochemical gradient over the inner membrane that drives transmembrane transport and the ATP synthase. Cytochrome c oxidase is the component of the respiratory chain that catalyzes the reduction of oxygen to water. Electrons originating from reduced cytochrome c in the intermembrane space (IMS) are transferred via the dinuclear copper A center (CU(A)) of subunit 2 and heme A of subunit 1 to the active site in subunit 1, a binuclear center (BNC) formed by heme A3 and copper B (CU(B)). The BNC reduces molecular oxygen to 2 water molecules using 4 electrons from cytochrome c in the IMS and 4 protons from the mitochondrial matrix.</text>
</comment>
<comment type="catalytic activity">
    <reaction evidence="1">
        <text>4 Fe(II)-[cytochrome c] + O2 + 8 H(+)(in) = 4 Fe(III)-[cytochrome c] + 2 H2O + 4 H(+)(out)</text>
        <dbReference type="Rhea" id="RHEA:11436"/>
        <dbReference type="Rhea" id="RHEA-COMP:10350"/>
        <dbReference type="Rhea" id="RHEA-COMP:14399"/>
        <dbReference type="ChEBI" id="CHEBI:15377"/>
        <dbReference type="ChEBI" id="CHEBI:15378"/>
        <dbReference type="ChEBI" id="CHEBI:15379"/>
        <dbReference type="ChEBI" id="CHEBI:29033"/>
        <dbReference type="ChEBI" id="CHEBI:29034"/>
        <dbReference type="EC" id="7.1.1.9"/>
    </reaction>
    <physiologicalReaction direction="left-to-right" evidence="1">
        <dbReference type="Rhea" id="RHEA:11437"/>
    </physiologicalReaction>
</comment>
<comment type="subunit">
    <text evidence="1">Component of the cytochrome c oxidase (complex IV, CIV), a multisubunit enzyme composed of a catalytic core of 3 subunits and several supernumerary subunits. The complex exists as a monomer or a dimer and forms supercomplexes (SCs) in the inner mitochondrial membrane with ubiquinol-cytochrome c oxidoreductase (cytochrome b-c1 complex, complex III, CIII).</text>
</comment>
<comment type="subcellular location">
    <subcellularLocation>
        <location evidence="1">Mitochondrion inner membrane</location>
        <topology evidence="1">Multi-pass membrane protein</topology>
    </subcellularLocation>
</comment>
<comment type="similarity">
    <text evidence="3">Belongs to the cytochrome c oxidase subunit 3 family.</text>
</comment>
<evidence type="ECO:0000250" key="1">
    <source>
        <dbReference type="UniProtKB" id="P00420"/>
    </source>
</evidence>
<evidence type="ECO:0000255" key="2"/>
<evidence type="ECO:0000305" key="3"/>
<proteinExistence type="inferred from homology"/>
<geneLocation type="mitochondrion"/>
<keyword id="KW-0472">Membrane</keyword>
<keyword id="KW-0496">Mitochondrion</keyword>
<keyword id="KW-0999">Mitochondrion inner membrane</keyword>
<keyword id="KW-1278">Translocase</keyword>
<keyword id="KW-0812">Transmembrane</keyword>
<keyword id="KW-1133">Transmembrane helix</keyword>